<gene>
    <name evidence="1" type="primary">hflD</name>
    <name type="ordered locus">APJL_0832</name>
</gene>
<accession>B0BPA5</accession>
<sequence length="210" mass="23439">MATNYHDITIAFAGVCQAVSLVQQFAHKGSADREIFANSIKSLLVTQPDSTLAVFDGQLANLKLGLETVQAQMGSPNGKLDTEIGRYWINVLALSQKLNKNPEAKAKLAERLQQIERQLPLYENDIMADQMIANLAAIYSDVISPLGSKIHVLGLQDYLVRPDIQQKIRASLLAGIRAGILWQQVGGTRWQFLFSRRKILNQTQQFYKSI</sequence>
<feature type="chain" id="PRO_1000132278" description="High frequency lysogenization protein HflD homolog">
    <location>
        <begin position="1"/>
        <end position="210"/>
    </location>
</feature>
<feature type="coiled-coil region" evidence="1">
    <location>
        <begin position="103"/>
        <end position="130"/>
    </location>
</feature>
<dbReference type="EMBL" id="CP000687">
    <property type="protein sequence ID" value="ABY69390.1"/>
    <property type="molecule type" value="Genomic_DNA"/>
</dbReference>
<dbReference type="RefSeq" id="WP_005601117.1">
    <property type="nucleotide sequence ID" value="NC_010278.1"/>
</dbReference>
<dbReference type="SMR" id="B0BPA5"/>
<dbReference type="KEGG" id="apj:APJL_0832"/>
<dbReference type="HOGENOM" id="CLU_098920_0_0_6"/>
<dbReference type="Proteomes" id="UP000008547">
    <property type="component" value="Chromosome"/>
</dbReference>
<dbReference type="GO" id="GO:0005737">
    <property type="term" value="C:cytoplasm"/>
    <property type="evidence" value="ECO:0007669"/>
    <property type="project" value="UniProtKB-SubCell"/>
</dbReference>
<dbReference type="GO" id="GO:0005886">
    <property type="term" value="C:plasma membrane"/>
    <property type="evidence" value="ECO:0007669"/>
    <property type="project" value="UniProtKB-SubCell"/>
</dbReference>
<dbReference type="Gene3D" id="1.10.3890.10">
    <property type="entry name" value="HflD-like"/>
    <property type="match status" value="1"/>
</dbReference>
<dbReference type="HAMAP" id="MF_00695">
    <property type="entry name" value="HflD_protein"/>
    <property type="match status" value="1"/>
</dbReference>
<dbReference type="InterPro" id="IPR007451">
    <property type="entry name" value="HflD"/>
</dbReference>
<dbReference type="InterPro" id="IPR035932">
    <property type="entry name" value="HflD-like_sf"/>
</dbReference>
<dbReference type="NCBIfam" id="NF001246">
    <property type="entry name" value="PRK00218.1-2"/>
    <property type="match status" value="1"/>
</dbReference>
<dbReference type="NCBIfam" id="NF001248">
    <property type="entry name" value="PRK00218.1-4"/>
    <property type="match status" value="1"/>
</dbReference>
<dbReference type="PANTHER" id="PTHR38100">
    <property type="entry name" value="HIGH FREQUENCY LYSOGENIZATION PROTEIN HFLD"/>
    <property type="match status" value="1"/>
</dbReference>
<dbReference type="PANTHER" id="PTHR38100:SF1">
    <property type="entry name" value="HIGH FREQUENCY LYSOGENIZATION PROTEIN HFLD"/>
    <property type="match status" value="1"/>
</dbReference>
<dbReference type="Pfam" id="PF04356">
    <property type="entry name" value="DUF489"/>
    <property type="match status" value="1"/>
</dbReference>
<dbReference type="SUPFAM" id="SSF101322">
    <property type="entry name" value="YcfC-like"/>
    <property type="match status" value="1"/>
</dbReference>
<reference key="1">
    <citation type="journal article" date="2008" name="PLoS ONE">
        <title>Genome biology of Actinobacillus pleuropneumoniae JL03, an isolate of serotype 3 prevalent in China.</title>
        <authorList>
            <person name="Xu Z."/>
            <person name="Zhou Y."/>
            <person name="Li L."/>
            <person name="Zhou R."/>
            <person name="Xiao S."/>
            <person name="Wan Y."/>
            <person name="Zhang S."/>
            <person name="Wang K."/>
            <person name="Li W."/>
            <person name="Li L."/>
            <person name="Jin H."/>
            <person name="Kang M."/>
            <person name="Dalai B."/>
            <person name="Li T."/>
            <person name="Liu L."/>
            <person name="Cheng Y."/>
            <person name="Zhang L."/>
            <person name="Xu T."/>
            <person name="Zheng H."/>
            <person name="Pu S."/>
            <person name="Wang B."/>
            <person name="Gu W."/>
            <person name="Zhang X.L."/>
            <person name="Zhu G.-F."/>
            <person name="Wang S."/>
            <person name="Zhao G.-P."/>
            <person name="Chen H."/>
        </authorList>
    </citation>
    <scope>NUCLEOTIDE SEQUENCE [LARGE SCALE GENOMIC DNA]</scope>
    <source>
        <strain>JL03</strain>
    </source>
</reference>
<keyword id="KW-0997">Cell inner membrane</keyword>
<keyword id="KW-1003">Cell membrane</keyword>
<keyword id="KW-0175">Coiled coil</keyword>
<keyword id="KW-0963">Cytoplasm</keyword>
<keyword id="KW-0472">Membrane</keyword>
<proteinExistence type="inferred from homology"/>
<evidence type="ECO:0000255" key="1">
    <source>
        <dbReference type="HAMAP-Rule" id="MF_00695"/>
    </source>
</evidence>
<name>HFLD_ACTPJ</name>
<comment type="subcellular location">
    <subcellularLocation>
        <location>Cytoplasm</location>
    </subcellularLocation>
    <subcellularLocation>
        <location evidence="1">Cell inner membrane</location>
        <topology evidence="1">Peripheral membrane protein</topology>
        <orientation evidence="1">Cytoplasmic side</orientation>
    </subcellularLocation>
</comment>
<comment type="similarity">
    <text evidence="1">Belongs to the HflD family.</text>
</comment>
<organism>
    <name type="scientific">Actinobacillus pleuropneumoniae serotype 3 (strain JL03)</name>
    <dbReference type="NCBI Taxonomy" id="434271"/>
    <lineage>
        <taxon>Bacteria</taxon>
        <taxon>Pseudomonadati</taxon>
        <taxon>Pseudomonadota</taxon>
        <taxon>Gammaproteobacteria</taxon>
        <taxon>Pasteurellales</taxon>
        <taxon>Pasteurellaceae</taxon>
        <taxon>Actinobacillus</taxon>
    </lineage>
</organism>
<protein>
    <recommendedName>
        <fullName evidence="1">High frequency lysogenization protein HflD homolog</fullName>
    </recommendedName>
</protein>